<gene>
    <name evidence="1" type="primary">FEN1</name>
    <name type="ORF">Tb927.3.830</name>
</gene>
<reference key="1">
    <citation type="journal article" date="2005" name="Science">
        <title>The genome of the African trypanosome Trypanosoma brucei.</title>
        <authorList>
            <person name="Berriman M."/>
            <person name="Ghedin E."/>
            <person name="Hertz-Fowler C."/>
            <person name="Blandin G."/>
            <person name="Renauld H."/>
            <person name="Bartholomeu D.C."/>
            <person name="Lennard N.J."/>
            <person name="Caler E."/>
            <person name="Hamlin N.E."/>
            <person name="Haas B."/>
            <person name="Bohme U."/>
            <person name="Hannick L."/>
            <person name="Aslett M.A."/>
            <person name="Shallom J."/>
            <person name="Marcello L."/>
            <person name="Hou L."/>
            <person name="Wickstead B."/>
            <person name="Alsmark U.C.M."/>
            <person name="Arrowsmith C."/>
            <person name="Atkin R.J."/>
            <person name="Barron A.J."/>
            <person name="Bringaud F."/>
            <person name="Brooks K."/>
            <person name="Carrington M."/>
            <person name="Cherevach I."/>
            <person name="Chillingworth T.J."/>
            <person name="Churcher C."/>
            <person name="Clark L.N."/>
            <person name="Corton C.H."/>
            <person name="Cronin A."/>
            <person name="Davies R.M."/>
            <person name="Doggett J."/>
            <person name="Djikeng A."/>
            <person name="Feldblyum T."/>
            <person name="Field M.C."/>
            <person name="Fraser A."/>
            <person name="Goodhead I."/>
            <person name="Hance Z."/>
            <person name="Harper D."/>
            <person name="Harris B.R."/>
            <person name="Hauser H."/>
            <person name="Hostetler J."/>
            <person name="Ivens A."/>
            <person name="Jagels K."/>
            <person name="Johnson D."/>
            <person name="Johnson J."/>
            <person name="Jones K."/>
            <person name="Kerhornou A.X."/>
            <person name="Koo H."/>
            <person name="Larke N."/>
            <person name="Landfear S."/>
            <person name="Larkin C."/>
            <person name="Leech V."/>
            <person name="Line A."/>
            <person name="Lord A."/>
            <person name="Macleod A."/>
            <person name="Mooney P.J."/>
            <person name="Moule S."/>
            <person name="Martin D.M."/>
            <person name="Morgan G.W."/>
            <person name="Mungall K."/>
            <person name="Norbertczak H."/>
            <person name="Ormond D."/>
            <person name="Pai G."/>
            <person name="Peacock C.S."/>
            <person name="Peterson J."/>
            <person name="Quail M.A."/>
            <person name="Rabbinowitsch E."/>
            <person name="Rajandream M.A."/>
            <person name="Reitter C."/>
            <person name="Salzberg S.L."/>
            <person name="Sanders M."/>
            <person name="Schobel S."/>
            <person name="Sharp S."/>
            <person name="Simmonds M."/>
            <person name="Simpson A.J."/>
            <person name="Tallon L."/>
            <person name="Turner C.M."/>
            <person name="Tait A."/>
            <person name="Tivey A.R."/>
            <person name="Van Aken S."/>
            <person name="Walker D."/>
            <person name="Wanless D."/>
            <person name="Wang S."/>
            <person name="White B."/>
            <person name="White O."/>
            <person name="Whitehead S."/>
            <person name="Woodward J."/>
            <person name="Wortman J."/>
            <person name="Adams M.D."/>
            <person name="Embley T.M."/>
            <person name="Gull K."/>
            <person name="Ullu E."/>
            <person name="Barry J.D."/>
            <person name="Fairlamb A.H."/>
            <person name="Opperdoes F."/>
            <person name="Barrell B.G."/>
            <person name="Donelson J.E."/>
            <person name="Hall N."/>
            <person name="Fraser C.M."/>
            <person name="Melville S.E."/>
            <person name="El-Sayed N.M.A."/>
        </authorList>
    </citation>
    <scope>NUCLEOTIDE SEQUENCE [LARGE SCALE GENOMIC DNA]</scope>
    <source>
        <strain evidence="3">927/4 GUTat10.1</strain>
    </source>
</reference>
<accession>Q57WW6</accession>
<evidence type="ECO:0000255" key="1">
    <source>
        <dbReference type="HAMAP-Rule" id="MF_03140"/>
    </source>
</evidence>
<evidence type="ECO:0000256" key="2">
    <source>
        <dbReference type="SAM" id="MobiDB-lite"/>
    </source>
</evidence>
<evidence type="ECO:0000312" key="3">
    <source>
        <dbReference type="Proteomes" id="UP000008524"/>
    </source>
</evidence>
<sequence length="393" mass="44363">MGVLGLSKLLYDRTPGAIKEQELKVYFGRRIAIDASMAVYQFVIAMKGFQEGQSVELTNEAGDVTSHLSGIFFRTLRMIDEGLRPIYVFDGKPPTLKASELESRRQRAEDAKHEFEKAKEEGDDEAMEKMSKRMVRVGRDQMEEVKTLLRLMGIPVVQAPSEAEAQCAELVKKNKAWAVGTEDMDALAFGSRVMLRHLTYGEAKKRPIAEYHLDEILEASGFSMQQFIDLCILLGCDYVPRISGIGPHKAWEGIKKYGSLEAFIESLDGTRYVVPEEFNYKDARNFFLEPEVTPGEEIDIQFREPDEEGLIKFLVDEKLFSKERVLKGIQRLRDALTKKTQGRLDQFFTITKPQKQVNSEASTAGTKRNRGAVALPGVLQRKSSSGHKKAVKK</sequence>
<organism>
    <name type="scientific">Trypanosoma brucei brucei (strain 927/4 GUTat10.1)</name>
    <dbReference type="NCBI Taxonomy" id="185431"/>
    <lineage>
        <taxon>Eukaryota</taxon>
        <taxon>Discoba</taxon>
        <taxon>Euglenozoa</taxon>
        <taxon>Kinetoplastea</taxon>
        <taxon>Metakinetoplastina</taxon>
        <taxon>Trypanosomatida</taxon>
        <taxon>Trypanosomatidae</taxon>
        <taxon>Trypanosoma</taxon>
    </lineage>
</organism>
<proteinExistence type="inferred from homology"/>
<keyword id="KW-0227">DNA damage</keyword>
<keyword id="KW-0234">DNA repair</keyword>
<keyword id="KW-0235">DNA replication</keyword>
<keyword id="KW-0255">Endonuclease</keyword>
<keyword id="KW-0269">Exonuclease</keyword>
<keyword id="KW-0378">Hydrolase</keyword>
<keyword id="KW-0460">Magnesium</keyword>
<keyword id="KW-0479">Metal-binding</keyword>
<keyword id="KW-0496">Mitochondrion</keyword>
<keyword id="KW-0540">Nuclease</keyword>
<keyword id="KW-0539">Nucleus</keyword>
<keyword id="KW-0597">Phosphoprotein</keyword>
<keyword id="KW-1185">Reference proteome</keyword>
<protein>
    <recommendedName>
        <fullName evidence="1">Flap endonuclease 1</fullName>
        <shortName evidence="1">FEN-1</shortName>
        <ecNumber evidence="1">3.1.-.-</ecNumber>
    </recommendedName>
    <alternativeName>
        <fullName evidence="1">Flap structure-specific endonuclease 1</fullName>
    </alternativeName>
</protein>
<name>FEN1_TRYB2</name>
<dbReference type="EC" id="3.1.-.-" evidence="1"/>
<dbReference type="EMBL" id="AC159425">
    <property type="protein sequence ID" value="AAX69901.1"/>
    <property type="molecule type" value="Genomic_DNA"/>
</dbReference>
<dbReference type="EMBL" id="CP000066">
    <property type="protein sequence ID" value="AAZ10120.1"/>
    <property type="molecule type" value="Genomic_DNA"/>
</dbReference>
<dbReference type="RefSeq" id="XP_843679.1">
    <property type="nucleotide sequence ID" value="XM_838586.1"/>
</dbReference>
<dbReference type="SMR" id="Q57WW6"/>
<dbReference type="FunCoup" id="Q57WW6">
    <property type="interactions" value="587"/>
</dbReference>
<dbReference type="STRING" id="185431.Q57WW6"/>
<dbReference type="PaxDb" id="5691-AAZ10120"/>
<dbReference type="GeneID" id="3656016"/>
<dbReference type="KEGG" id="tbr:Tb927.3.830"/>
<dbReference type="VEuPathDB" id="TriTrypDB:Tb927.3.830"/>
<dbReference type="eggNOG" id="KOG2519">
    <property type="taxonomic scope" value="Eukaryota"/>
</dbReference>
<dbReference type="InParanoid" id="Q57WW6"/>
<dbReference type="OMA" id="MGIPWVQ"/>
<dbReference type="OrthoDB" id="1937206at2759"/>
<dbReference type="Proteomes" id="UP000008524">
    <property type="component" value="Chromosome 3"/>
</dbReference>
<dbReference type="GO" id="GO:0005739">
    <property type="term" value="C:mitochondrion"/>
    <property type="evidence" value="ECO:0007669"/>
    <property type="project" value="UniProtKB-SubCell"/>
</dbReference>
<dbReference type="GO" id="GO:0005730">
    <property type="term" value="C:nucleolus"/>
    <property type="evidence" value="ECO:0007669"/>
    <property type="project" value="UniProtKB-SubCell"/>
</dbReference>
<dbReference type="GO" id="GO:0005654">
    <property type="term" value="C:nucleoplasm"/>
    <property type="evidence" value="ECO:0007669"/>
    <property type="project" value="UniProtKB-SubCell"/>
</dbReference>
<dbReference type="GO" id="GO:0005634">
    <property type="term" value="C:nucleus"/>
    <property type="evidence" value="ECO:0000314"/>
    <property type="project" value="GeneDB"/>
</dbReference>
<dbReference type="GO" id="GO:0008409">
    <property type="term" value="F:5'-3' exonuclease activity"/>
    <property type="evidence" value="ECO:0000318"/>
    <property type="project" value="GO_Central"/>
</dbReference>
<dbReference type="GO" id="GO:0017108">
    <property type="term" value="F:5'-flap endonuclease activity"/>
    <property type="evidence" value="ECO:0000318"/>
    <property type="project" value="GO_Central"/>
</dbReference>
<dbReference type="GO" id="GO:0003677">
    <property type="term" value="F:DNA binding"/>
    <property type="evidence" value="ECO:0007669"/>
    <property type="project" value="UniProtKB-UniRule"/>
</dbReference>
<dbReference type="GO" id="GO:0000287">
    <property type="term" value="F:magnesium ion binding"/>
    <property type="evidence" value="ECO:0007669"/>
    <property type="project" value="UniProtKB-UniRule"/>
</dbReference>
<dbReference type="GO" id="GO:0006284">
    <property type="term" value="P:base-excision repair"/>
    <property type="evidence" value="ECO:0007669"/>
    <property type="project" value="UniProtKB-UniRule"/>
</dbReference>
<dbReference type="GO" id="GO:0043137">
    <property type="term" value="P:DNA replication, removal of RNA primer"/>
    <property type="evidence" value="ECO:0007669"/>
    <property type="project" value="UniProtKB-UniRule"/>
</dbReference>
<dbReference type="CDD" id="cd09907">
    <property type="entry name" value="H3TH_FEN1-Euk"/>
    <property type="match status" value="1"/>
</dbReference>
<dbReference type="CDD" id="cd09867">
    <property type="entry name" value="PIN_FEN1"/>
    <property type="match status" value="1"/>
</dbReference>
<dbReference type="FunFam" id="1.10.150.20:FF:000009">
    <property type="entry name" value="Flap endonuclease 1"/>
    <property type="match status" value="1"/>
</dbReference>
<dbReference type="FunFam" id="3.40.50.1010:FF:000016">
    <property type="entry name" value="Flap endonuclease 1"/>
    <property type="match status" value="1"/>
</dbReference>
<dbReference type="Gene3D" id="1.10.150.20">
    <property type="entry name" value="5' to 3' exonuclease, C-terminal subdomain"/>
    <property type="match status" value="1"/>
</dbReference>
<dbReference type="Gene3D" id="3.40.50.1010">
    <property type="entry name" value="5'-nuclease"/>
    <property type="match status" value="1"/>
</dbReference>
<dbReference type="HAMAP" id="MF_00614">
    <property type="entry name" value="Fen"/>
    <property type="match status" value="1"/>
</dbReference>
<dbReference type="InterPro" id="IPR036279">
    <property type="entry name" value="5-3_exonuclease_C_sf"/>
</dbReference>
<dbReference type="InterPro" id="IPR023426">
    <property type="entry name" value="Flap_endonuc"/>
</dbReference>
<dbReference type="InterPro" id="IPR008918">
    <property type="entry name" value="HhH2"/>
</dbReference>
<dbReference type="InterPro" id="IPR029060">
    <property type="entry name" value="PIN-like_dom_sf"/>
</dbReference>
<dbReference type="InterPro" id="IPR006086">
    <property type="entry name" value="XPG-I_dom"/>
</dbReference>
<dbReference type="InterPro" id="IPR006084">
    <property type="entry name" value="XPG/Rad2"/>
</dbReference>
<dbReference type="InterPro" id="IPR019974">
    <property type="entry name" value="XPG_CS"/>
</dbReference>
<dbReference type="InterPro" id="IPR006085">
    <property type="entry name" value="XPG_DNA_repair_N"/>
</dbReference>
<dbReference type="PANTHER" id="PTHR11081:SF9">
    <property type="entry name" value="FLAP ENDONUCLEASE 1"/>
    <property type="match status" value="1"/>
</dbReference>
<dbReference type="PANTHER" id="PTHR11081">
    <property type="entry name" value="FLAP ENDONUCLEASE FAMILY MEMBER"/>
    <property type="match status" value="1"/>
</dbReference>
<dbReference type="Pfam" id="PF00867">
    <property type="entry name" value="XPG_I"/>
    <property type="match status" value="1"/>
</dbReference>
<dbReference type="Pfam" id="PF00752">
    <property type="entry name" value="XPG_N"/>
    <property type="match status" value="1"/>
</dbReference>
<dbReference type="PRINTS" id="PR00853">
    <property type="entry name" value="XPGRADSUPER"/>
</dbReference>
<dbReference type="SMART" id="SM00279">
    <property type="entry name" value="HhH2"/>
    <property type="match status" value="1"/>
</dbReference>
<dbReference type="SMART" id="SM00484">
    <property type="entry name" value="XPGI"/>
    <property type="match status" value="1"/>
</dbReference>
<dbReference type="SMART" id="SM00485">
    <property type="entry name" value="XPGN"/>
    <property type="match status" value="1"/>
</dbReference>
<dbReference type="SUPFAM" id="SSF47807">
    <property type="entry name" value="5' to 3' exonuclease, C-terminal subdomain"/>
    <property type="match status" value="1"/>
</dbReference>
<dbReference type="SUPFAM" id="SSF88723">
    <property type="entry name" value="PIN domain-like"/>
    <property type="match status" value="1"/>
</dbReference>
<dbReference type="PROSITE" id="PS00841">
    <property type="entry name" value="XPG_1"/>
    <property type="match status" value="1"/>
</dbReference>
<dbReference type="PROSITE" id="PS00842">
    <property type="entry name" value="XPG_2"/>
    <property type="match status" value="1"/>
</dbReference>
<comment type="function">
    <text evidence="1">Structure-specific nuclease with 5'-flap endonuclease and 5'-3' exonuclease activities involved in DNA replication and repair. During DNA replication, cleaves the 5'-overhanging flap structure that is generated by displacement synthesis when DNA polymerase encounters the 5'-end of a downstream Okazaki fragment. It enters the flap from the 5'-end and then tracks to cleave the flap base, leaving a nick for ligation. Also involved in the long patch base excision repair (LP-BER) pathway, by cleaving within the apurinic/apyrimidinic (AP) site-terminated flap. Acts as a genome stabilization factor that prevents flaps from equilibrating into structures that lead to duplications and deletions. Also possesses 5'-3' exonuclease activity on nicked or gapped double-stranded DNA, and exhibits RNase H activity. Also involved in replication and repair of rDNA and in repairing mitochondrial DNA.</text>
</comment>
<comment type="cofactor">
    <cofactor evidence="1">
        <name>Mg(2+)</name>
        <dbReference type="ChEBI" id="CHEBI:18420"/>
    </cofactor>
    <text evidence="1">Binds 2 magnesium ions per subunit. They probably participate in the reaction catalyzed by the enzyme. May bind an additional third magnesium ion after substrate binding.</text>
</comment>
<comment type="subunit">
    <text evidence="1">Interacts with PCNA. Three molecules of FEN1 bind to one PCNA trimer with each molecule binding to one PCNA monomer. PCNA stimulates the nuclease activity without altering cleavage specificity.</text>
</comment>
<comment type="subcellular location">
    <subcellularLocation>
        <location evidence="1">Nucleus</location>
        <location evidence="1">Nucleolus</location>
    </subcellularLocation>
    <subcellularLocation>
        <location evidence="1">Nucleus</location>
        <location evidence="1">Nucleoplasm</location>
    </subcellularLocation>
    <subcellularLocation>
        <location evidence="1">Mitochondrion</location>
    </subcellularLocation>
    <text evidence="1">Resides mostly in the nucleoli and relocalizes to the nucleoplasm upon DNA damage.</text>
</comment>
<comment type="PTM">
    <text evidence="1">Phosphorylated. Phosphorylation upon DNA damage induces relocalization to the nuclear plasma.</text>
</comment>
<comment type="similarity">
    <text evidence="1">Belongs to the XPG/RAD2 endonuclease family. FEN1 subfamily.</text>
</comment>
<feature type="chain" id="PRO_0000403549" description="Flap endonuclease 1">
    <location>
        <begin position="1"/>
        <end position="393"/>
    </location>
</feature>
<feature type="region of interest" description="N-domain">
    <location>
        <begin position="1"/>
        <end position="108"/>
    </location>
</feature>
<feature type="region of interest" description="Disordered" evidence="2">
    <location>
        <begin position="99"/>
        <end position="127"/>
    </location>
</feature>
<feature type="region of interest" description="I-domain">
    <location>
        <begin position="126"/>
        <end position="257"/>
    </location>
</feature>
<feature type="region of interest" description="Interaction with PCNA" evidence="1">
    <location>
        <begin position="340"/>
        <end position="348"/>
    </location>
</feature>
<feature type="region of interest" description="Disordered" evidence="2">
    <location>
        <begin position="358"/>
        <end position="393"/>
    </location>
</feature>
<feature type="compositionally biased region" description="Basic and acidic residues" evidence="2">
    <location>
        <begin position="99"/>
        <end position="120"/>
    </location>
</feature>
<feature type="compositionally biased region" description="Basic residues" evidence="2">
    <location>
        <begin position="384"/>
        <end position="393"/>
    </location>
</feature>
<feature type="binding site" evidence="1">
    <location>
        <position position="34"/>
    </location>
    <ligand>
        <name>Mg(2+)</name>
        <dbReference type="ChEBI" id="CHEBI:18420"/>
        <label>1</label>
    </ligand>
</feature>
<feature type="binding site" evidence="1">
    <location>
        <position position="74"/>
    </location>
    <ligand>
        <name>DNA</name>
        <dbReference type="ChEBI" id="CHEBI:16991"/>
    </ligand>
</feature>
<feature type="binding site" evidence="1">
    <location>
        <position position="90"/>
    </location>
    <ligand>
        <name>Mg(2+)</name>
        <dbReference type="ChEBI" id="CHEBI:18420"/>
        <label>1</label>
    </ligand>
</feature>
<feature type="binding site" evidence="1">
    <location>
        <position position="162"/>
    </location>
    <ligand>
        <name>DNA</name>
        <dbReference type="ChEBI" id="CHEBI:16991"/>
    </ligand>
</feature>
<feature type="binding site" evidence="1">
    <location>
        <position position="162"/>
    </location>
    <ligand>
        <name>Mg(2+)</name>
        <dbReference type="ChEBI" id="CHEBI:18420"/>
        <label>1</label>
    </ligand>
</feature>
<feature type="binding site" evidence="1">
    <location>
        <position position="164"/>
    </location>
    <ligand>
        <name>Mg(2+)</name>
        <dbReference type="ChEBI" id="CHEBI:18420"/>
        <label>1</label>
    </ligand>
</feature>
<feature type="binding site" evidence="1">
    <location>
        <position position="183"/>
    </location>
    <ligand>
        <name>Mg(2+)</name>
        <dbReference type="ChEBI" id="CHEBI:18420"/>
        <label>2</label>
    </ligand>
</feature>
<feature type="binding site" evidence="1">
    <location>
        <position position="185"/>
    </location>
    <ligand>
        <name>Mg(2+)</name>
        <dbReference type="ChEBI" id="CHEBI:18420"/>
        <label>2</label>
    </ligand>
</feature>
<feature type="binding site" evidence="1">
    <location>
        <position position="235"/>
    </location>
    <ligand>
        <name>DNA</name>
        <dbReference type="ChEBI" id="CHEBI:16991"/>
    </ligand>
</feature>
<feature type="binding site" evidence="1">
    <location>
        <position position="237"/>
    </location>
    <ligand>
        <name>DNA</name>
        <dbReference type="ChEBI" id="CHEBI:16991"/>
    </ligand>
</feature>
<feature type="binding site" evidence="1">
    <location>
        <position position="237"/>
    </location>
    <ligand>
        <name>Mg(2+)</name>
        <dbReference type="ChEBI" id="CHEBI:18420"/>
        <label>2</label>
    </ligand>
</feature>